<dbReference type="EMBL" id="CU329671">
    <property type="protein sequence ID" value="CAA22832.1"/>
    <property type="molecule type" value="Genomic_DNA"/>
</dbReference>
<dbReference type="PIR" id="T40574">
    <property type="entry name" value="T40574"/>
</dbReference>
<dbReference type="RefSeq" id="NP_596313.1">
    <property type="nucleotide sequence ID" value="NM_001022235.2"/>
</dbReference>
<dbReference type="SMR" id="O94527"/>
<dbReference type="BioGRID" id="277636">
    <property type="interactions" value="33"/>
</dbReference>
<dbReference type="FunCoup" id="O94527">
    <property type="interactions" value="72"/>
</dbReference>
<dbReference type="STRING" id="284812.O94527"/>
<dbReference type="PaxDb" id="4896-SPBC609.03.1"/>
<dbReference type="EnsemblFungi" id="SPBC609.03.1">
    <property type="protein sequence ID" value="SPBC609.03.1:pep"/>
    <property type="gene ID" value="SPBC609.03"/>
</dbReference>
<dbReference type="GeneID" id="2541121"/>
<dbReference type="KEGG" id="spo:2541121"/>
<dbReference type="PomBase" id="SPBC609.03">
    <property type="gene designation" value="iqw1"/>
</dbReference>
<dbReference type="VEuPathDB" id="FungiDB:SPBC609.03"/>
<dbReference type="eggNOG" id="KOG1310">
    <property type="taxonomic scope" value="Eukaryota"/>
</dbReference>
<dbReference type="HOGENOM" id="CLU_012381_3_1_1"/>
<dbReference type="InParanoid" id="O94527"/>
<dbReference type="OMA" id="FRVRYGN"/>
<dbReference type="PhylomeDB" id="O94527"/>
<dbReference type="Reactome" id="R-SPO-8951664">
    <property type="pathway name" value="Neddylation"/>
</dbReference>
<dbReference type="PRO" id="PR:O94527"/>
<dbReference type="Proteomes" id="UP000002485">
    <property type="component" value="Chromosome II"/>
</dbReference>
<dbReference type="GO" id="GO:0080008">
    <property type="term" value="C:Cul4-RING E3 ubiquitin ligase complex"/>
    <property type="evidence" value="ECO:0000318"/>
    <property type="project" value="GO_Central"/>
</dbReference>
<dbReference type="GO" id="GO:0005737">
    <property type="term" value="C:cytoplasm"/>
    <property type="evidence" value="ECO:0000318"/>
    <property type="project" value="GO_Central"/>
</dbReference>
<dbReference type="GO" id="GO:0005829">
    <property type="term" value="C:cytosol"/>
    <property type="evidence" value="ECO:0007005"/>
    <property type="project" value="PomBase"/>
</dbReference>
<dbReference type="GO" id="GO:0005634">
    <property type="term" value="C:nucleus"/>
    <property type="evidence" value="ECO:0000266"/>
    <property type="project" value="PomBase"/>
</dbReference>
<dbReference type="GO" id="GO:0045717">
    <property type="term" value="P:negative regulation of fatty acid biosynthetic process"/>
    <property type="evidence" value="ECO:0000318"/>
    <property type="project" value="GO_Central"/>
</dbReference>
<dbReference type="Gene3D" id="2.130.10.10">
    <property type="entry name" value="YVTN repeat-like/Quinoprotein amine dehydrogenase"/>
    <property type="match status" value="2"/>
</dbReference>
<dbReference type="InterPro" id="IPR045151">
    <property type="entry name" value="DCAF8"/>
</dbReference>
<dbReference type="InterPro" id="IPR015943">
    <property type="entry name" value="WD40/YVTN_repeat-like_dom_sf"/>
</dbReference>
<dbReference type="InterPro" id="IPR019775">
    <property type="entry name" value="WD40_repeat_CS"/>
</dbReference>
<dbReference type="InterPro" id="IPR036322">
    <property type="entry name" value="WD40_repeat_dom_sf"/>
</dbReference>
<dbReference type="InterPro" id="IPR001680">
    <property type="entry name" value="WD40_rpt"/>
</dbReference>
<dbReference type="PANTHER" id="PTHR15574:SF40">
    <property type="entry name" value="WD AND TETRATRICOPEPTIDE REPEATS PROTEIN 1"/>
    <property type="match status" value="1"/>
</dbReference>
<dbReference type="PANTHER" id="PTHR15574">
    <property type="entry name" value="WD REPEAT DOMAIN-CONTAINING FAMILY"/>
    <property type="match status" value="1"/>
</dbReference>
<dbReference type="Pfam" id="PF00400">
    <property type="entry name" value="WD40"/>
    <property type="match status" value="2"/>
</dbReference>
<dbReference type="SMART" id="SM00320">
    <property type="entry name" value="WD40"/>
    <property type="match status" value="6"/>
</dbReference>
<dbReference type="SUPFAM" id="SSF50978">
    <property type="entry name" value="WD40 repeat-like"/>
    <property type="match status" value="1"/>
</dbReference>
<dbReference type="PROSITE" id="PS00678">
    <property type="entry name" value="WD_REPEATS_1"/>
    <property type="match status" value="1"/>
</dbReference>
<dbReference type="PROSITE" id="PS50082">
    <property type="entry name" value="WD_REPEATS_2"/>
    <property type="match status" value="1"/>
</dbReference>
<dbReference type="PROSITE" id="PS50294">
    <property type="entry name" value="WD_REPEATS_REGION"/>
    <property type="match status" value="2"/>
</dbReference>
<protein>
    <recommendedName>
        <fullName>WD repeat protein iqw1</fullName>
    </recommendedName>
</protein>
<sequence length="809" mass="92499">MSGISLSLRQLDYRDWFQRKISRDIYGNSTWLTGIDLQKELTGHTGCVNTLDWSADGEFLLSGSDDTRLIVWDVFNEYKPRHLISTGHVQNIFSAKFVPYSNNRQILSASGDKLIKLFDLDSSKEGGMDHGMETQTRCWSCALDSVKNIVPCDNGHTFLVCSEDGTARQYDIREPHVCNQDLDCPSILVNYNPYRINLYTITMSPSNPYYFAIGGTHPYAFLYDRRMVKKSFRDDWTMNTSPEKDCRCVRKFSPDGSCNSQGILDRYITCCQFSAANPNELLVSWNSDYVYLFHVHEDKSYTPTFNKIEDSNKKPSKPSLLQTQPLKRKNYSPWYKNNFGASTPASRVSRNPYTAAQPRKHTFYQMYENIEKFFTTENGGLYESIVSGRLSHFSRSIQYVKDAIYFLENYNYIPDSNGLNHSIRVSALRYWRACVSILALMDDTVSLEPNTIIQAGWGWLYDFMNWVTRYLLGISDHWALQMSPPTNVARQNFVLCDPDEPSRVLFSNPSEMIRAFARIDTNDLSSVRRFFWIHKVLRGCLLLISSDIYWEQFQPWDSSTSDVTSSQRLDDENGFLTLLEPPVNYENEVESSSGENIVSMYTGHSDLNDDDDDYQDEESYSYASDDDDESDEDSDEGPTLLSLRMKKRKAVEPNVPVNTHVKSYYGHCNVESIKNVNFYGQNDEYVMSGSDDGRFFIWDKLNASILAIIHGDSEAVNVIEGHPRCPTLAVSGIDSTVKIFNTENTPPSGCSRNHTSNSYKIIATNEMNRQQGSRDSYITSRMLSHLAYRAHLDDGFGHEVLDTDACSIM</sequence>
<accession>O94527</accession>
<keyword id="KW-0963">Cytoplasm</keyword>
<keyword id="KW-1185">Reference proteome</keyword>
<keyword id="KW-0677">Repeat</keyword>
<keyword id="KW-0853">WD repeat</keyword>
<feature type="chain" id="PRO_0000316550" description="WD repeat protein iqw1">
    <location>
        <begin position="1"/>
        <end position="809"/>
    </location>
</feature>
<feature type="repeat" description="WD 1">
    <location>
        <begin position="43"/>
        <end position="82"/>
    </location>
</feature>
<feature type="repeat" description="WD 2">
    <location>
        <begin position="87"/>
        <end position="128"/>
    </location>
</feature>
<feature type="repeat" description="WD 3">
    <location>
        <begin position="141"/>
        <end position="180"/>
    </location>
</feature>
<feature type="repeat" description="WD 4">
    <location>
        <begin position="193"/>
        <end position="233"/>
    </location>
</feature>
<feature type="repeat" description="WD 5">
    <location>
        <begin position="241"/>
        <end position="295"/>
    </location>
</feature>
<feature type="repeat" description="WD 6">
    <location>
        <begin position="668"/>
        <end position="708"/>
    </location>
</feature>
<feature type="repeat" description="WD 7">
    <location>
        <begin position="711"/>
        <end position="750"/>
    </location>
</feature>
<feature type="region of interest" description="Disordered" evidence="2">
    <location>
        <begin position="599"/>
        <end position="644"/>
    </location>
</feature>
<feature type="compositionally biased region" description="Acidic residues" evidence="2">
    <location>
        <begin position="608"/>
        <end position="636"/>
    </location>
</feature>
<evidence type="ECO:0000250" key="1"/>
<evidence type="ECO:0000256" key="2">
    <source>
        <dbReference type="SAM" id="MobiDB-lite"/>
    </source>
</evidence>
<evidence type="ECO:0000269" key="3">
    <source>
    </source>
</evidence>
<evidence type="ECO:0000269" key="4">
    <source>
    </source>
</evidence>
<name>IQW1_SCHPO</name>
<gene>
    <name type="primary">iqw1</name>
    <name type="ORF">SPBC609.03</name>
</gene>
<organism>
    <name type="scientific">Schizosaccharomyces pombe (strain 972 / ATCC 24843)</name>
    <name type="common">Fission yeast</name>
    <dbReference type="NCBI Taxonomy" id="284812"/>
    <lineage>
        <taxon>Eukaryota</taxon>
        <taxon>Fungi</taxon>
        <taxon>Dikarya</taxon>
        <taxon>Ascomycota</taxon>
        <taxon>Taphrinomycotina</taxon>
        <taxon>Schizosaccharomycetes</taxon>
        <taxon>Schizosaccharomycetales</taxon>
        <taxon>Schizosaccharomycetaceae</taxon>
        <taxon>Schizosaccharomyces</taxon>
    </lineage>
</organism>
<comment type="function">
    <text evidence="1">Ligand-dependent coactivator of nuclear receptors that may function as a substrate receptor for CUL4-DDB1 E3 ubiquitin-protein ligase complex.</text>
</comment>
<comment type="subunit">
    <text evidence="4">Interacts with ddb1.</text>
</comment>
<comment type="subcellular location">
    <subcellularLocation>
        <location evidence="3">Cytoplasm</location>
    </subcellularLocation>
</comment>
<proteinExistence type="evidence at protein level"/>
<reference key="1">
    <citation type="journal article" date="2002" name="Nature">
        <title>The genome sequence of Schizosaccharomyces pombe.</title>
        <authorList>
            <person name="Wood V."/>
            <person name="Gwilliam R."/>
            <person name="Rajandream M.A."/>
            <person name="Lyne M.H."/>
            <person name="Lyne R."/>
            <person name="Stewart A."/>
            <person name="Sgouros J.G."/>
            <person name="Peat N."/>
            <person name="Hayles J."/>
            <person name="Baker S.G."/>
            <person name="Basham D."/>
            <person name="Bowman S."/>
            <person name="Brooks K."/>
            <person name="Brown D."/>
            <person name="Brown S."/>
            <person name="Chillingworth T."/>
            <person name="Churcher C.M."/>
            <person name="Collins M."/>
            <person name="Connor R."/>
            <person name="Cronin A."/>
            <person name="Davis P."/>
            <person name="Feltwell T."/>
            <person name="Fraser A."/>
            <person name="Gentles S."/>
            <person name="Goble A."/>
            <person name="Hamlin N."/>
            <person name="Harris D.E."/>
            <person name="Hidalgo J."/>
            <person name="Hodgson G."/>
            <person name="Holroyd S."/>
            <person name="Hornsby T."/>
            <person name="Howarth S."/>
            <person name="Huckle E.J."/>
            <person name="Hunt S."/>
            <person name="Jagels K."/>
            <person name="James K.D."/>
            <person name="Jones L."/>
            <person name="Jones M."/>
            <person name="Leather S."/>
            <person name="McDonald S."/>
            <person name="McLean J."/>
            <person name="Mooney P."/>
            <person name="Moule S."/>
            <person name="Mungall K.L."/>
            <person name="Murphy L.D."/>
            <person name="Niblett D."/>
            <person name="Odell C."/>
            <person name="Oliver K."/>
            <person name="O'Neil S."/>
            <person name="Pearson D."/>
            <person name="Quail M.A."/>
            <person name="Rabbinowitsch E."/>
            <person name="Rutherford K.M."/>
            <person name="Rutter S."/>
            <person name="Saunders D."/>
            <person name="Seeger K."/>
            <person name="Sharp S."/>
            <person name="Skelton J."/>
            <person name="Simmonds M.N."/>
            <person name="Squares R."/>
            <person name="Squares S."/>
            <person name="Stevens K."/>
            <person name="Taylor K."/>
            <person name="Taylor R.G."/>
            <person name="Tivey A."/>
            <person name="Walsh S.V."/>
            <person name="Warren T."/>
            <person name="Whitehead S."/>
            <person name="Woodward J.R."/>
            <person name="Volckaert G."/>
            <person name="Aert R."/>
            <person name="Robben J."/>
            <person name="Grymonprez B."/>
            <person name="Weltjens I."/>
            <person name="Vanstreels E."/>
            <person name="Rieger M."/>
            <person name="Schaefer M."/>
            <person name="Mueller-Auer S."/>
            <person name="Gabel C."/>
            <person name="Fuchs M."/>
            <person name="Duesterhoeft A."/>
            <person name="Fritzc C."/>
            <person name="Holzer E."/>
            <person name="Moestl D."/>
            <person name="Hilbert H."/>
            <person name="Borzym K."/>
            <person name="Langer I."/>
            <person name="Beck A."/>
            <person name="Lehrach H."/>
            <person name="Reinhardt R."/>
            <person name="Pohl T.M."/>
            <person name="Eger P."/>
            <person name="Zimmermann W."/>
            <person name="Wedler H."/>
            <person name="Wambutt R."/>
            <person name="Purnelle B."/>
            <person name="Goffeau A."/>
            <person name="Cadieu E."/>
            <person name="Dreano S."/>
            <person name="Gloux S."/>
            <person name="Lelaure V."/>
            <person name="Mottier S."/>
            <person name="Galibert F."/>
            <person name="Aves S.J."/>
            <person name="Xiang Z."/>
            <person name="Hunt C."/>
            <person name="Moore K."/>
            <person name="Hurst S.M."/>
            <person name="Lucas M."/>
            <person name="Rochet M."/>
            <person name="Gaillardin C."/>
            <person name="Tallada V.A."/>
            <person name="Garzon A."/>
            <person name="Thode G."/>
            <person name="Daga R.R."/>
            <person name="Cruzado L."/>
            <person name="Jimenez J."/>
            <person name="Sanchez M."/>
            <person name="del Rey F."/>
            <person name="Benito J."/>
            <person name="Dominguez A."/>
            <person name="Revuelta J.L."/>
            <person name="Moreno S."/>
            <person name="Armstrong J."/>
            <person name="Forsburg S.L."/>
            <person name="Cerutti L."/>
            <person name="Lowe T."/>
            <person name="McCombie W.R."/>
            <person name="Paulsen I."/>
            <person name="Potashkin J."/>
            <person name="Shpakovski G.V."/>
            <person name="Ussery D."/>
            <person name="Barrell B.G."/>
            <person name="Nurse P."/>
        </authorList>
    </citation>
    <scope>NUCLEOTIDE SEQUENCE [LARGE SCALE GENOMIC DNA]</scope>
    <source>
        <strain>972 / ATCC 24843</strain>
    </source>
</reference>
<reference key="2">
    <citation type="journal article" date="2006" name="Nat. Biotechnol.">
        <title>ORFeome cloning and global analysis of protein localization in the fission yeast Schizosaccharomyces pombe.</title>
        <authorList>
            <person name="Matsuyama A."/>
            <person name="Arai R."/>
            <person name="Yashiroda Y."/>
            <person name="Shirai A."/>
            <person name="Kamata A."/>
            <person name="Sekido S."/>
            <person name="Kobayashi Y."/>
            <person name="Hashimoto A."/>
            <person name="Hamamoto M."/>
            <person name="Hiraoka Y."/>
            <person name="Horinouchi S."/>
            <person name="Yoshida M."/>
        </authorList>
    </citation>
    <scope>SUBCELLULAR LOCATION [LARGE SCALE ANALYSIS]</scope>
</reference>
<reference key="3">
    <citation type="journal article" date="2008" name="Mol. Cell. Biol.">
        <title>Schizosaccharomyces pombe Ddb1 recruits substrate-specific adaptor proteins through a novel protein motif, the DDB-box.</title>
        <authorList>
            <person name="Fukumoto Y."/>
            <person name="Dohmae N."/>
            <person name="Hanaoka F."/>
        </authorList>
    </citation>
    <scope>IDENTIFICATION BY MASS SPECTROMETRY</scope>
    <scope>INTERACTION WITH DDB1</scope>
</reference>